<comment type="function">
    <text evidence="1">Part of the Sec protein translocase complex. Interacts with the SecYEG preprotein conducting channel. Has a central role in coupling the hydrolysis of ATP to the transfer of proteins into and across the cell membrane, serving as an ATP-driven molecular motor driving the stepwise translocation of polypeptide chains across the membrane.</text>
</comment>
<comment type="catalytic activity">
    <reaction evidence="1">
        <text>ATP + H2O + cellular proteinSide 1 = ADP + phosphate + cellular proteinSide 2.</text>
        <dbReference type="EC" id="7.4.2.8"/>
    </reaction>
</comment>
<comment type="subunit">
    <text evidence="1">Monomer and homodimer. Part of the essential Sec protein translocation apparatus which comprises SecA, SecYEG and auxiliary proteins SecDF. Other proteins may also be involved.</text>
</comment>
<comment type="subcellular location">
    <subcellularLocation>
        <location evidence="1">Cell membrane</location>
        <topology evidence="1">Peripheral membrane protein</topology>
        <orientation evidence="1">Cytoplasmic side</orientation>
    </subcellularLocation>
    <subcellularLocation>
        <location evidence="1">Cytoplasm</location>
    </subcellularLocation>
    <text evidence="1">Distribution is 50-50.</text>
</comment>
<comment type="similarity">
    <text evidence="1">Belongs to the SecA family.</text>
</comment>
<name>SECA2_PEDPA</name>
<keyword id="KW-0067">ATP-binding</keyword>
<keyword id="KW-1003">Cell membrane</keyword>
<keyword id="KW-0963">Cytoplasm</keyword>
<keyword id="KW-0472">Membrane</keyword>
<keyword id="KW-0547">Nucleotide-binding</keyword>
<keyword id="KW-0653">Protein transport</keyword>
<keyword id="KW-1278">Translocase</keyword>
<keyword id="KW-0811">Translocation</keyword>
<keyword id="KW-0813">Transport</keyword>
<gene>
    <name evidence="1" type="primary">secA2</name>
    <name type="ordered locus">PEPE_0062</name>
</gene>
<reference key="1">
    <citation type="journal article" date="2006" name="Proc. Natl. Acad. Sci. U.S.A.">
        <title>Comparative genomics of the lactic acid bacteria.</title>
        <authorList>
            <person name="Makarova K.S."/>
            <person name="Slesarev A."/>
            <person name="Wolf Y.I."/>
            <person name="Sorokin A."/>
            <person name="Mirkin B."/>
            <person name="Koonin E.V."/>
            <person name="Pavlov A."/>
            <person name="Pavlova N."/>
            <person name="Karamychev V."/>
            <person name="Polouchine N."/>
            <person name="Shakhova V."/>
            <person name="Grigoriev I."/>
            <person name="Lou Y."/>
            <person name="Rohksar D."/>
            <person name="Lucas S."/>
            <person name="Huang K."/>
            <person name="Goodstein D.M."/>
            <person name="Hawkins T."/>
            <person name="Plengvidhya V."/>
            <person name="Welker D."/>
            <person name="Hughes J."/>
            <person name="Goh Y."/>
            <person name="Benson A."/>
            <person name="Baldwin K."/>
            <person name="Lee J.-H."/>
            <person name="Diaz-Muniz I."/>
            <person name="Dosti B."/>
            <person name="Smeianov V."/>
            <person name="Wechter W."/>
            <person name="Barabote R."/>
            <person name="Lorca G."/>
            <person name="Altermann E."/>
            <person name="Barrangou R."/>
            <person name="Ganesan B."/>
            <person name="Xie Y."/>
            <person name="Rawsthorne H."/>
            <person name="Tamir D."/>
            <person name="Parker C."/>
            <person name="Breidt F."/>
            <person name="Broadbent J.R."/>
            <person name="Hutkins R."/>
            <person name="O'Sullivan D."/>
            <person name="Steele J."/>
            <person name="Unlu G."/>
            <person name="Saier M.H. Jr."/>
            <person name="Klaenhammer T."/>
            <person name="Richardson P."/>
            <person name="Kozyavkin S."/>
            <person name="Weimer B.C."/>
            <person name="Mills D.A."/>
        </authorList>
    </citation>
    <scope>NUCLEOTIDE SEQUENCE [LARGE SCALE GENOMIC DNA]</scope>
    <source>
        <strain>ATCC 25745 / CCUG 21536 / LMG 10740 / 183-1w</strain>
    </source>
</reference>
<proteinExistence type="inferred from homology"/>
<evidence type="ECO:0000255" key="1">
    <source>
        <dbReference type="HAMAP-Rule" id="MF_01382"/>
    </source>
</evidence>
<feature type="chain" id="PRO_0000318400" description="Protein translocase subunit SecA 2">
    <location>
        <begin position="1"/>
        <end position="789"/>
    </location>
</feature>
<feature type="binding site" evidence="1">
    <location>
        <position position="79"/>
    </location>
    <ligand>
        <name>ATP</name>
        <dbReference type="ChEBI" id="CHEBI:30616"/>
    </ligand>
</feature>
<feature type="binding site" evidence="1">
    <location>
        <begin position="97"/>
        <end position="101"/>
    </location>
    <ligand>
        <name>ATP</name>
        <dbReference type="ChEBI" id="CHEBI:30616"/>
    </ligand>
</feature>
<feature type="binding site" evidence="1">
    <location>
        <position position="487"/>
    </location>
    <ligand>
        <name>ATP</name>
        <dbReference type="ChEBI" id="CHEBI:30616"/>
    </ligand>
</feature>
<organism>
    <name type="scientific">Pediococcus pentosaceus (strain ATCC 25745 / CCUG 21536 / LMG 10740 / 183-1w)</name>
    <dbReference type="NCBI Taxonomy" id="278197"/>
    <lineage>
        <taxon>Bacteria</taxon>
        <taxon>Bacillati</taxon>
        <taxon>Bacillota</taxon>
        <taxon>Bacilli</taxon>
        <taxon>Lactobacillales</taxon>
        <taxon>Lactobacillaceae</taxon>
        <taxon>Pediococcus</taxon>
    </lineage>
</organism>
<accession>Q03HZ9</accession>
<protein>
    <recommendedName>
        <fullName evidence="1">Protein translocase subunit SecA 2</fullName>
        <ecNumber evidence="1">7.4.2.8</ecNumber>
    </recommendedName>
</protein>
<dbReference type="EC" id="7.4.2.8" evidence="1"/>
<dbReference type="EMBL" id="CP000422">
    <property type="protein sequence ID" value="ABJ67173.1"/>
    <property type="molecule type" value="Genomic_DNA"/>
</dbReference>
<dbReference type="RefSeq" id="WP_011672804.1">
    <property type="nucleotide sequence ID" value="NC_008525.1"/>
</dbReference>
<dbReference type="SMR" id="Q03HZ9"/>
<dbReference type="STRING" id="278197.PEPE_0062"/>
<dbReference type="GeneID" id="33062264"/>
<dbReference type="KEGG" id="ppe:PEPE_0062"/>
<dbReference type="eggNOG" id="COG0653">
    <property type="taxonomic scope" value="Bacteria"/>
</dbReference>
<dbReference type="HOGENOM" id="CLU_005314_3_2_9"/>
<dbReference type="OrthoDB" id="9762243at2"/>
<dbReference type="Proteomes" id="UP000000773">
    <property type="component" value="Chromosome"/>
</dbReference>
<dbReference type="GO" id="GO:0031522">
    <property type="term" value="C:cell envelope Sec protein transport complex"/>
    <property type="evidence" value="ECO:0007669"/>
    <property type="project" value="TreeGrafter"/>
</dbReference>
<dbReference type="GO" id="GO:0005829">
    <property type="term" value="C:cytosol"/>
    <property type="evidence" value="ECO:0007669"/>
    <property type="project" value="TreeGrafter"/>
</dbReference>
<dbReference type="GO" id="GO:0005886">
    <property type="term" value="C:plasma membrane"/>
    <property type="evidence" value="ECO:0007669"/>
    <property type="project" value="UniProtKB-SubCell"/>
</dbReference>
<dbReference type="GO" id="GO:0005524">
    <property type="term" value="F:ATP binding"/>
    <property type="evidence" value="ECO:0007669"/>
    <property type="project" value="UniProtKB-UniRule"/>
</dbReference>
<dbReference type="GO" id="GO:0008564">
    <property type="term" value="F:protein-exporting ATPase activity"/>
    <property type="evidence" value="ECO:0007669"/>
    <property type="project" value="UniProtKB-EC"/>
</dbReference>
<dbReference type="GO" id="GO:0065002">
    <property type="term" value="P:intracellular protein transmembrane transport"/>
    <property type="evidence" value="ECO:0007669"/>
    <property type="project" value="UniProtKB-UniRule"/>
</dbReference>
<dbReference type="GO" id="GO:0017038">
    <property type="term" value="P:protein import"/>
    <property type="evidence" value="ECO:0007669"/>
    <property type="project" value="InterPro"/>
</dbReference>
<dbReference type="GO" id="GO:0006605">
    <property type="term" value="P:protein targeting"/>
    <property type="evidence" value="ECO:0007669"/>
    <property type="project" value="UniProtKB-UniRule"/>
</dbReference>
<dbReference type="GO" id="GO:0043952">
    <property type="term" value="P:protein transport by the Sec complex"/>
    <property type="evidence" value="ECO:0007669"/>
    <property type="project" value="TreeGrafter"/>
</dbReference>
<dbReference type="CDD" id="cd17928">
    <property type="entry name" value="DEXDc_SecA"/>
    <property type="match status" value="1"/>
</dbReference>
<dbReference type="CDD" id="cd18803">
    <property type="entry name" value="SF2_C_secA"/>
    <property type="match status" value="1"/>
</dbReference>
<dbReference type="FunFam" id="3.40.50.300:FF:000429">
    <property type="entry name" value="Preprotein translocase subunit SecA"/>
    <property type="match status" value="1"/>
</dbReference>
<dbReference type="Gene3D" id="1.10.3060.10">
    <property type="entry name" value="Helical scaffold and wing domains of SecA"/>
    <property type="match status" value="1"/>
</dbReference>
<dbReference type="Gene3D" id="3.40.50.300">
    <property type="entry name" value="P-loop containing nucleotide triphosphate hydrolases"/>
    <property type="match status" value="3"/>
</dbReference>
<dbReference type="Gene3D" id="3.90.1440.10">
    <property type="entry name" value="SecA, preprotein cross-linking domain"/>
    <property type="match status" value="1"/>
</dbReference>
<dbReference type="HAMAP" id="MF_01382">
    <property type="entry name" value="SecA"/>
    <property type="match status" value="1"/>
</dbReference>
<dbReference type="InterPro" id="IPR014001">
    <property type="entry name" value="Helicase_ATP-bd"/>
</dbReference>
<dbReference type="InterPro" id="IPR001650">
    <property type="entry name" value="Helicase_C-like"/>
</dbReference>
<dbReference type="InterPro" id="IPR027417">
    <property type="entry name" value="P-loop_NTPase"/>
</dbReference>
<dbReference type="InterPro" id="IPR000185">
    <property type="entry name" value="SecA"/>
</dbReference>
<dbReference type="InterPro" id="IPR022490">
    <property type="entry name" value="SecA2"/>
</dbReference>
<dbReference type="InterPro" id="IPR011115">
    <property type="entry name" value="SecA_DEAD"/>
</dbReference>
<dbReference type="InterPro" id="IPR014018">
    <property type="entry name" value="SecA_motor_DEAD"/>
</dbReference>
<dbReference type="InterPro" id="IPR011130">
    <property type="entry name" value="SecA_preprotein_X-link_dom"/>
</dbReference>
<dbReference type="InterPro" id="IPR044722">
    <property type="entry name" value="SecA_SF2_C"/>
</dbReference>
<dbReference type="InterPro" id="IPR011116">
    <property type="entry name" value="SecA_Wing/Scaffold"/>
</dbReference>
<dbReference type="InterPro" id="IPR036266">
    <property type="entry name" value="SecA_Wing/Scaffold_sf"/>
</dbReference>
<dbReference type="InterPro" id="IPR036670">
    <property type="entry name" value="SecA_X-link_sf"/>
</dbReference>
<dbReference type="NCBIfam" id="NF006630">
    <property type="entry name" value="PRK09200.1"/>
    <property type="match status" value="1"/>
</dbReference>
<dbReference type="NCBIfam" id="TIGR03714">
    <property type="entry name" value="secA2"/>
    <property type="match status" value="1"/>
</dbReference>
<dbReference type="PANTHER" id="PTHR30612:SF0">
    <property type="entry name" value="CHLOROPLAST PROTEIN-TRANSPORTING ATPASE"/>
    <property type="match status" value="1"/>
</dbReference>
<dbReference type="PANTHER" id="PTHR30612">
    <property type="entry name" value="SECA INNER MEMBRANE COMPONENT OF SEC PROTEIN SECRETION SYSTEM"/>
    <property type="match status" value="1"/>
</dbReference>
<dbReference type="Pfam" id="PF21090">
    <property type="entry name" value="P-loop_SecA"/>
    <property type="match status" value="2"/>
</dbReference>
<dbReference type="Pfam" id="PF07517">
    <property type="entry name" value="SecA_DEAD"/>
    <property type="match status" value="1"/>
</dbReference>
<dbReference type="Pfam" id="PF01043">
    <property type="entry name" value="SecA_PP_bind"/>
    <property type="match status" value="1"/>
</dbReference>
<dbReference type="Pfam" id="PF07516">
    <property type="entry name" value="SecA_SW"/>
    <property type="match status" value="1"/>
</dbReference>
<dbReference type="PRINTS" id="PR00906">
    <property type="entry name" value="SECA"/>
</dbReference>
<dbReference type="SMART" id="SM00957">
    <property type="entry name" value="SecA_DEAD"/>
    <property type="match status" value="1"/>
</dbReference>
<dbReference type="SMART" id="SM00958">
    <property type="entry name" value="SecA_PP_bind"/>
    <property type="match status" value="1"/>
</dbReference>
<dbReference type="SUPFAM" id="SSF81886">
    <property type="entry name" value="Helical scaffold and wing domains of SecA"/>
    <property type="match status" value="1"/>
</dbReference>
<dbReference type="SUPFAM" id="SSF52540">
    <property type="entry name" value="P-loop containing nucleoside triphosphate hydrolases"/>
    <property type="match status" value="2"/>
</dbReference>
<dbReference type="SUPFAM" id="SSF81767">
    <property type="entry name" value="Pre-protein crosslinking domain of SecA"/>
    <property type="match status" value="1"/>
</dbReference>
<dbReference type="PROSITE" id="PS51196">
    <property type="entry name" value="SECA_MOTOR_DEAD"/>
    <property type="match status" value="1"/>
</dbReference>
<sequence length="789" mass="89472">MEFNLDNFRLRKYSKITKKILALGKKYQTLTDDQLRIKTETLRNKLVKGASLDSILIEAYATIREADFRVLGLKPFENQVLGAVVLHYGNVAQMNTGEGKTLTATMPLYLNGLTGPGNFLVTVNSYLANRDAEEIGKVYKWMGLTCASGVSLDDEELDKKAIYQNDIVYTTNSELGFDYLTDNLVDNINKKKLNDLNFALVDEVDSVLLDLAQTPLVISGAPRVQSNLFVSTDRIVKSLKPNVDFEFSEDLKDVWFTQTGIEQLEEYLGIQGLISDKWSDFYRHLVLALKANYVMKRNQDYIVTNREVLLLDSENGRALTGMKLEAGIHQAIEAKEEVELSDQTRSMASITLQNFFKMFRKLSGMTGTAKSSAREFLEVYNLPVLKIPTHKPNIRIDHADVVFATMDEKIEATVRMVKAAYQIKRPVLLKTGSLSLSRLYSRVLLEHGIVHNVLNAQSESKEAMIVASAGKSGAITVATSMAGRGTDIKLGKGVKEKGGLLVIGTERMDSRRVDDQLRGRAGRQGDPGESIFLVSLDDKVVIENAPDWVEKYRLKLEQAVEQGKRKYGAPLKGRRARKIVEKAQQAADSAAEESRKNAVKMDDILRIQRELIYDFRDYIMKSTDLTTMVQQIKNDYFNAIARENKKDAGKLLDFIINNVDYNYMDNDFNPEILESTADIKQYLEEIARNRWSQQQMIVNNKFKQNYLERLAVLKALDVAWIEQVDNLQQLKTVVTSRSSGQHNPVFEYEKEAMHSFEQMKKLFWKNTVKYMLLSELIPGKNGSVRVEFP</sequence>